<comment type="function">
    <text evidence="1">Part of the phosphoribosylformylglycinamidine synthase complex involved in the purines biosynthetic pathway. Catalyzes the ATP-dependent conversion of formylglycinamide ribonucleotide (FGAR) and glutamine to yield formylglycinamidine ribonucleotide (FGAM) and glutamate. The FGAM synthase complex is composed of three subunits. PurQ produces an ammonia molecule by converting glutamine to glutamate. PurL transfers the ammonia molecule to FGAR to form FGAM in an ATP-dependent manner. PurS interacts with PurQ and PurL and is thought to assist in the transfer of the ammonia molecule from PurQ to PurL.</text>
</comment>
<comment type="catalytic activity">
    <reaction evidence="1">
        <text>N(2)-formyl-N(1)-(5-phospho-beta-D-ribosyl)glycinamide + L-glutamine + ATP + H2O = 2-formamido-N(1)-(5-O-phospho-beta-D-ribosyl)acetamidine + L-glutamate + ADP + phosphate + H(+)</text>
        <dbReference type="Rhea" id="RHEA:17129"/>
        <dbReference type="ChEBI" id="CHEBI:15377"/>
        <dbReference type="ChEBI" id="CHEBI:15378"/>
        <dbReference type="ChEBI" id="CHEBI:29985"/>
        <dbReference type="ChEBI" id="CHEBI:30616"/>
        <dbReference type="ChEBI" id="CHEBI:43474"/>
        <dbReference type="ChEBI" id="CHEBI:58359"/>
        <dbReference type="ChEBI" id="CHEBI:147286"/>
        <dbReference type="ChEBI" id="CHEBI:147287"/>
        <dbReference type="ChEBI" id="CHEBI:456216"/>
        <dbReference type="EC" id="6.3.5.3"/>
    </reaction>
</comment>
<comment type="pathway">
    <text evidence="1">Purine metabolism; IMP biosynthesis via de novo pathway; 5-amino-1-(5-phospho-D-ribosyl)imidazole from N(2)-formyl-N(1)-(5-phospho-D-ribosyl)glycinamide: step 1/2.</text>
</comment>
<comment type="subunit">
    <text evidence="1">Monomer. Part of the FGAM synthase complex composed of 1 PurL, 1 PurQ and 2 PurS subunits.</text>
</comment>
<comment type="subcellular location">
    <subcellularLocation>
        <location evidence="1">Cytoplasm</location>
    </subcellularLocation>
</comment>
<comment type="similarity">
    <text evidence="1">Belongs to the FGAMS family.</text>
</comment>
<dbReference type="EC" id="6.3.5.3" evidence="1"/>
<dbReference type="EMBL" id="CP000033">
    <property type="protein sequence ID" value="AAV43373.1"/>
    <property type="molecule type" value="Genomic_DNA"/>
</dbReference>
<dbReference type="RefSeq" id="WP_003548366.1">
    <property type="nucleotide sequence ID" value="NC_006814.3"/>
</dbReference>
<dbReference type="RefSeq" id="YP_194404.1">
    <property type="nucleotide sequence ID" value="NC_006814.3"/>
</dbReference>
<dbReference type="SMR" id="Q5FIV1"/>
<dbReference type="STRING" id="272621.LBA1556"/>
<dbReference type="GeneID" id="93289378"/>
<dbReference type="KEGG" id="lac:LBA1556"/>
<dbReference type="PATRIC" id="fig|272621.13.peg.1478"/>
<dbReference type="eggNOG" id="COG0046">
    <property type="taxonomic scope" value="Bacteria"/>
</dbReference>
<dbReference type="HOGENOM" id="CLU_003100_0_1_9"/>
<dbReference type="OrthoDB" id="9804441at2"/>
<dbReference type="BioCyc" id="LACI272621:G1G49-1521-MONOMER"/>
<dbReference type="UniPathway" id="UPA00074">
    <property type="reaction ID" value="UER00128"/>
</dbReference>
<dbReference type="Proteomes" id="UP000006381">
    <property type="component" value="Chromosome"/>
</dbReference>
<dbReference type="GO" id="GO:0005737">
    <property type="term" value="C:cytoplasm"/>
    <property type="evidence" value="ECO:0007669"/>
    <property type="project" value="UniProtKB-SubCell"/>
</dbReference>
<dbReference type="GO" id="GO:0005524">
    <property type="term" value="F:ATP binding"/>
    <property type="evidence" value="ECO:0007669"/>
    <property type="project" value="UniProtKB-UniRule"/>
</dbReference>
<dbReference type="GO" id="GO:0000287">
    <property type="term" value="F:magnesium ion binding"/>
    <property type="evidence" value="ECO:0007669"/>
    <property type="project" value="UniProtKB-UniRule"/>
</dbReference>
<dbReference type="GO" id="GO:0004642">
    <property type="term" value="F:phosphoribosylformylglycinamidine synthase activity"/>
    <property type="evidence" value="ECO:0007669"/>
    <property type="project" value="UniProtKB-UniRule"/>
</dbReference>
<dbReference type="GO" id="GO:0006189">
    <property type="term" value="P:'de novo' IMP biosynthetic process"/>
    <property type="evidence" value="ECO:0007669"/>
    <property type="project" value="UniProtKB-UniRule"/>
</dbReference>
<dbReference type="CDD" id="cd02203">
    <property type="entry name" value="PurL_repeat1"/>
    <property type="match status" value="1"/>
</dbReference>
<dbReference type="CDD" id="cd02204">
    <property type="entry name" value="PurL_repeat2"/>
    <property type="match status" value="1"/>
</dbReference>
<dbReference type="FunFam" id="3.30.1330.10:FF:000004">
    <property type="entry name" value="Phosphoribosylformylglycinamidine synthase subunit PurL"/>
    <property type="match status" value="1"/>
</dbReference>
<dbReference type="Gene3D" id="3.90.650.10">
    <property type="entry name" value="PurM-like C-terminal domain"/>
    <property type="match status" value="2"/>
</dbReference>
<dbReference type="Gene3D" id="3.30.1330.10">
    <property type="entry name" value="PurM-like, N-terminal domain"/>
    <property type="match status" value="2"/>
</dbReference>
<dbReference type="HAMAP" id="MF_00420">
    <property type="entry name" value="PurL_2"/>
    <property type="match status" value="1"/>
</dbReference>
<dbReference type="InterPro" id="IPR010074">
    <property type="entry name" value="PRibForGlyAmidine_synth_PurL"/>
</dbReference>
<dbReference type="InterPro" id="IPR041609">
    <property type="entry name" value="PurL_linker"/>
</dbReference>
<dbReference type="InterPro" id="IPR010918">
    <property type="entry name" value="PurM-like_C_dom"/>
</dbReference>
<dbReference type="InterPro" id="IPR036676">
    <property type="entry name" value="PurM-like_C_sf"/>
</dbReference>
<dbReference type="InterPro" id="IPR016188">
    <property type="entry name" value="PurM-like_N"/>
</dbReference>
<dbReference type="InterPro" id="IPR036921">
    <property type="entry name" value="PurM-like_N_sf"/>
</dbReference>
<dbReference type="NCBIfam" id="TIGR01736">
    <property type="entry name" value="FGAM_synth_II"/>
    <property type="match status" value="1"/>
</dbReference>
<dbReference type="NCBIfam" id="NF002290">
    <property type="entry name" value="PRK01213.1"/>
    <property type="match status" value="1"/>
</dbReference>
<dbReference type="PANTHER" id="PTHR43555">
    <property type="entry name" value="PHOSPHORIBOSYLFORMYLGLYCINAMIDINE SYNTHASE SUBUNIT PURL"/>
    <property type="match status" value="1"/>
</dbReference>
<dbReference type="PANTHER" id="PTHR43555:SF1">
    <property type="entry name" value="PHOSPHORIBOSYLFORMYLGLYCINAMIDINE SYNTHASE SUBUNIT PURL"/>
    <property type="match status" value="1"/>
</dbReference>
<dbReference type="Pfam" id="PF00586">
    <property type="entry name" value="AIRS"/>
    <property type="match status" value="2"/>
</dbReference>
<dbReference type="Pfam" id="PF02769">
    <property type="entry name" value="AIRS_C"/>
    <property type="match status" value="2"/>
</dbReference>
<dbReference type="Pfam" id="PF18072">
    <property type="entry name" value="FGAR-AT_linker"/>
    <property type="match status" value="1"/>
</dbReference>
<dbReference type="PIRSF" id="PIRSF001587">
    <property type="entry name" value="FGAM_synthase_II"/>
    <property type="match status" value="1"/>
</dbReference>
<dbReference type="SUPFAM" id="SSF109736">
    <property type="entry name" value="FGAM synthase PurL, linker domain"/>
    <property type="match status" value="1"/>
</dbReference>
<dbReference type="SUPFAM" id="SSF56042">
    <property type="entry name" value="PurM C-terminal domain-like"/>
    <property type="match status" value="2"/>
</dbReference>
<dbReference type="SUPFAM" id="SSF55326">
    <property type="entry name" value="PurM N-terminal domain-like"/>
    <property type="match status" value="2"/>
</dbReference>
<sequence length="742" mass="81520">MKQAMTPEEIKEKKPYLDWSLSEHEYDYICDHLLHRLPNYTEIGLFSAMWSEHCSYKKSKPVLKLFPTKGKRVVQGPGEGAGVVDIDDGQAVVFKAESHNHPTTVEPYQGAATGVGGILRDVFSMGARPVAILDSLHFGELKDNPTMRYKMEETIKGVGDYGNCMGIPNLGGETTFDPCYNGNILLNAMNVGIMDIKDMEHGDATGVGNAVMYVGAKTGRDGIHGATFASADFSEEHATQRSAVQVGDPFMEKLLMEACLELILHHREWLVGIQDMGAAGIVSSSAEMATEGKSGMDLNLNLVPQREPNMSAYEIMLSESQERMLLCVKKGHEEDVKKIFDEYNLDAVTIGRITDDGRYVLHHDDQVVCDIPVVTLTEKVLEEKSEEKKPQRIIDVEQSENWQPEIEDAGQTLRALLNQPTIANDQFVTQQYDSQVRTDTIVGPGSDSGILRVRHTKKAIAMTTDTNGRFVYLDPKVGGQRTVLESATNIVASGALPLAITDCLNYGDPNDPEIFWELHQSCQGIADACEILETPVVSGNVSLYNENNGKAIYPSPMIGMVGLIKNYDHVIPMHMQTAGDKIYLVGKTDDDFAGSELQKMMTGKISGLPHAPNLPGIKDYLYKLQKLMAEGLVQSAHDLSEGGLGVSLAESVFDTDLGVNVKLDFNKNLLFSETPGRLIVSVAPENAAKFEQEMGDAVSEIGQVTDDKQLNISLTNDQVNEDVAKLQKIWKECIPCLMKSKA</sequence>
<name>PURL_LACAC</name>
<protein>
    <recommendedName>
        <fullName evidence="1">Phosphoribosylformylglycinamidine synthase subunit PurL</fullName>
        <shortName evidence="1">FGAM synthase</shortName>
        <ecNumber evidence="1">6.3.5.3</ecNumber>
    </recommendedName>
    <alternativeName>
        <fullName evidence="1">Formylglycinamide ribonucleotide amidotransferase subunit II</fullName>
        <shortName evidence="1">FGAR amidotransferase II</shortName>
        <shortName evidence="1">FGAR-AT II</shortName>
    </alternativeName>
    <alternativeName>
        <fullName evidence="1">Glutamine amidotransferase PurL</fullName>
    </alternativeName>
    <alternativeName>
        <fullName evidence="1">Phosphoribosylformylglycinamidine synthase subunit II</fullName>
    </alternativeName>
</protein>
<accession>Q5FIV1</accession>
<proteinExistence type="inferred from homology"/>
<evidence type="ECO:0000255" key="1">
    <source>
        <dbReference type="HAMAP-Rule" id="MF_00420"/>
    </source>
</evidence>
<feature type="chain" id="PRO_0000100459" description="Phosphoribosylformylglycinamidine synthase subunit PurL">
    <location>
        <begin position="1"/>
        <end position="742"/>
    </location>
</feature>
<feature type="active site" evidence="1">
    <location>
        <position position="53"/>
    </location>
</feature>
<feature type="active site" description="Proton acceptor" evidence="1">
    <location>
        <position position="99"/>
    </location>
</feature>
<feature type="binding site" evidence="1">
    <location>
        <position position="56"/>
    </location>
    <ligand>
        <name>ATP</name>
        <dbReference type="ChEBI" id="CHEBI:30616"/>
    </ligand>
</feature>
<feature type="binding site" evidence="1">
    <location>
        <position position="95"/>
    </location>
    <ligand>
        <name>ATP</name>
        <dbReference type="ChEBI" id="CHEBI:30616"/>
    </ligand>
</feature>
<feature type="binding site" evidence="1">
    <location>
        <position position="97"/>
    </location>
    <ligand>
        <name>Mg(2+)</name>
        <dbReference type="ChEBI" id="CHEBI:18420"/>
        <label>1</label>
    </ligand>
</feature>
<feature type="binding site" evidence="1">
    <location>
        <begin position="98"/>
        <end position="101"/>
    </location>
    <ligand>
        <name>substrate</name>
    </ligand>
</feature>
<feature type="binding site" evidence="1">
    <location>
        <position position="120"/>
    </location>
    <ligand>
        <name>substrate</name>
    </ligand>
</feature>
<feature type="binding site" evidence="1">
    <location>
        <position position="121"/>
    </location>
    <ligand>
        <name>Mg(2+)</name>
        <dbReference type="ChEBI" id="CHEBI:18420"/>
        <label>2</label>
    </ligand>
</feature>
<feature type="binding site" evidence="1">
    <location>
        <position position="245"/>
    </location>
    <ligand>
        <name>substrate</name>
    </ligand>
</feature>
<feature type="binding site" evidence="1">
    <location>
        <position position="275"/>
    </location>
    <ligand>
        <name>Mg(2+)</name>
        <dbReference type="ChEBI" id="CHEBI:18420"/>
        <label>2</label>
    </ligand>
</feature>
<feature type="binding site" evidence="1">
    <location>
        <begin position="319"/>
        <end position="321"/>
    </location>
    <ligand>
        <name>substrate</name>
    </ligand>
</feature>
<feature type="binding site" evidence="1">
    <location>
        <position position="502"/>
    </location>
    <ligand>
        <name>ATP</name>
        <dbReference type="ChEBI" id="CHEBI:30616"/>
    </ligand>
</feature>
<feature type="binding site" evidence="1">
    <location>
        <position position="539"/>
    </location>
    <ligand>
        <name>ATP</name>
        <dbReference type="ChEBI" id="CHEBI:30616"/>
    </ligand>
</feature>
<feature type="binding site" evidence="1">
    <location>
        <position position="540"/>
    </location>
    <ligand>
        <name>Mg(2+)</name>
        <dbReference type="ChEBI" id="CHEBI:18420"/>
        <label>1</label>
    </ligand>
</feature>
<feature type="binding site" evidence="1">
    <location>
        <position position="542"/>
    </location>
    <ligand>
        <name>substrate</name>
    </ligand>
</feature>
<keyword id="KW-0067">ATP-binding</keyword>
<keyword id="KW-0963">Cytoplasm</keyword>
<keyword id="KW-0436">Ligase</keyword>
<keyword id="KW-0460">Magnesium</keyword>
<keyword id="KW-0479">Metal-binding</keyword>
<keyword id="KW-0547">Nucleotide-binding</keyword>
<keyword id="KW-0658">Purine biosynthesis</keyword>
<keyword id="KW-1185">Reference proteome</keyword>
<organism>
    <name type="scientific">Lactobacillus acidophilus (strain ATCC 700396 / NCK56 / N2 / NCFM)</name>
    <dbReference type="NCBI Taxonomy" id="272621"/>
    <lineage>
        <taxon>Bacteria</taxon>
        <taxon>Bacillati</taxon>
        <taxon>Bacillota</taxon>
        <taxon>Bacilli</taxon>
        <taxon>Lactobacillales</taxon>
        <taxon>Lactobacillaceae</taxon>
        <taxon>Lactobacillus</taxon>
    </lineage>
</organism>
<reference key="1">
    <citation type="journal article" date="2005" name="Proc. Natl. Acad. Sci. U.S.A.">
        <title>Complete genome sequence of the probiotic lactic acid bacterium Lactobacillus acidophilus NCFM.</title>
        <authorList>
            <person name="Altermann E."/>
            <person name="Russell W.M."/>
            <person name="Azcarate-Peril M.A."/>
            <person name="Barrangou R."/>
            <person name="Buck B.L."/>
            <person name="McAuliffe O."/>
            <person name="Souther N."/>
            <person name="Dobson A."/>
            <person name="Duong T."/>
            <person name="Callanan M."/>
            <person name="Lick S."/>
            <person name="Hamrick A."/>
            <person name="Cano R."/>
            <person name="Klaenhammer T.R."/>
        </authorList>
    </citation>
    <scope>NUCLEOTIDE SEQUENCE [LARGE SCALE GENOMIC DNA]</scope>
    <source>
        <strain>ATCC 700396 / NCK56 / N2 / NCFM</strain>
    </source>
</reference>
<gene>
    <name evidence="1" type="primary">purL</name>
    <name type="ordered locus">LBA1556</name>
</gene>